<sequence length="459" mass="52087">MLKLYNSLTRQKEEFKPIQPGKVGMYVCGVTIYDLCHIGHGRTFVAFDMIVRYLRYIGYDVNFHRNITDVDDKIIKRATENGESCDALTERLTQEMYHDFDALNMKRPDFEPRATQHMPEIIEMVERLLERDHAYIADNGDVLFSVASFPEYGRLSGQNLDQLQAGARVEVDENKRDPMDFVLWKMSKPGEPTWDSPWGPGRPGWHIECSAMNSKHLGEHFDIHGGGSDLQFPHHENEIAQSCCAHDTPYVNYWMHTGMVMVDKEKMSKSLNNFFTIRDVLAHYDASTVRYFLLSGHYRSQLNYSEDNLKQAKAALERLYTALKGLDLSVEAAPASEYVAKFKEAMDDDFNTPEAYSVLFDMAREINRLKVDDLAAASALGVSMKQLGDVLGILEQDVDGFFKGEGSDDEVAQIEALIAERNRARTEKDWAAADVARDGLNALGVILEDGPEGTTWRKK</sequence>
<proteinExistence type="inferred from homology"/>
<protein>
    <recommendedName>
        <fullName evidence="1">Cysteine--tRNA ligase</fullName>
        <ecNumber evidence="1">6.1.1.16</ecNumber>
    </recommendedName>
    <alternativeName>
        <fullName evidence="1">Cysteinyl-tRNA synthetase</fullName>
        <shortName evidence="1">CysRS</shortName>
    </alternativeName>
</protein>
<reference key="1">
    <citation type="submission" date="2007-03" db="EMBL/GenBank/DDBJ databases">
        <title>Complete sequence of Shewanella loihica PV-4.</title>
        <authorList>
            <consortium name="US DOE Joint Genome Institute"/>
            <person name="Copeland A."/>
            <person name="Lucas S."/>
            <person name="Lapidus A."/>
            <person name="Barry K."/>
            <person name="Detter J.C."/>
            <person name="Glavina del Rio T."/>
            <person name="Hammon N."/>
            <person name="Israni S."/>
            <person name="Dalin E."/>
            <person name="Tice H."/>
            <person name="Pitluck S."/>
            <person name="Chain P."/>
            <person name="Malfatti S."/>
            <person name="Shin M."/>
            <person name="Vergez L."/>
            <person name="Schmutz J."/>
            <person name="Larimer F."/>
            <person name="Land M."/>
            <person name="Hauser L."/>
            <person name="Kyrpides N."/>
            <person name="Mikhailova N."/>
            <person name="Romine M.F."/>
            <person name="Serres G."/>
            <person name="Fredrickson J."/>
            <person name="Tiedje J."/>
            <person name="Richardson P."/>
        </authorList>
    </citation>
    <scope>NUCLEOTIDE SEQUENCE [LARGE SCALE GENOMIC DNA]</scope>
    <source>
        <strain>ATCC BAA-1088 / PV-4</strain>
    </source>
</reference>
<evidence type="ECO:0000255" key="1">
    <source>
        <dbReference type="HAMAP-Rule" id="MF_00041"/>
    </source>
</evidence>
<accession>A3QFX9</accession>
<gene>
    <name evidence="1" type="primary">cysS</name>
    <name type="ordered locus">Shew_2511</name>
</gene>
<dbReference type="EC" id="6.1.1.16" evidence="1"/>
<dbReference type="EMBL" id="CP000606">
    <property type="protein sequence ID" value="ABO24377.1"/>
    <property type="molecule type" value="Genomic_DNA"/>
</dbReference>
<dbReference type="RefSeq" id="WP_011866308.1">
    <property type="nucleotide sequence ID" value="NC_009092.1"/>
</dbReference>
<dbReference type="SMR" id="A3QFX9"/>
<dbReference type="STRING" id="323850.Shew_2511"/>
<dbReference type="KEGG" id="slo:Shew_2511"/>
<dbReference type="eggNOG" id="COG0215">
    <property type="taxonomic scope" value="Bacteria"/>
</dbReference>
<dbReference type="HOGENOM" id="CLU_013528_0_1_6"/>
<dbReference type="OrthoDB" id="9815130at2"/>
<dbReference type="Proteomes" id="UP000001558">
    <property type="component" value="Chromosome"/>
</dbReference>
<dbReference type="GO" id="GO:0005829">
    <property type="term" value="C:cytosol"/>
    <property type="evidence" value="ECO:0007669"/>
    <property type="project" value="TreeGrafter"/>
</dbReference>
<dbReference type="GO" id="GO:0005524">
    <property type="term" value="F:ATP binding"/>
    <property type="evidence" value="ECO:0007669"/>
    <property type="project" value="UniProtKB-UniRule"/>
</dbReference>
<dbReference type="GO" id="GO:0004817">
    <property type="term" value="F:cysteine-tRNA ligase activity"/>
    <property type="evidence" value="ECO:0007669"/>
    <property type="project" value="UniProtKB-UniRule"/>
</dbReference>
<dbReference type="GO" id="GO:0008270">
    <property type="term" value="F:zinc ion binding"/>
    <property type="evidence" value="ECO:0007669"/>
    <property type="project" value="UniProtKB-UniRule"/>
</dbReference>
<dbReference type="GO" id="GO:0006423">
    <property type="term" value="P:cysteinyl-tRNA aminoacylation"/>
    <property type="evidence" value="ECO:0007669"/>
    <property type="project" value="UniProtKB-UniRule"/>
</dbReference>
<dbReference type="CDD" id="cd07963">
    <property type="entry name" value="Anticodon_Ia_Cys"/>
    <property type="match status" value="1"/>
</dbReference>
<dbReference type="CDD" id="cd00672">
    <property type="entry name" value="CysRS_core"/>
    <property type="match status" value="1"/>
</dbReference>
<dbReference type="FunFam" id="1.20.120.1910:FF:000001">
    <property type="entry name" value="Cysteine--tRNA ligase"/>
    <property type="match status" value="1"/>
</dbReference>
<dbReference type="FunFam" id="3.40.50.620:FF:000009">
    <property type="entry name" value="Cysteine--tRNA ligase"/>
    <property type="match status" value="1"/>
</dbReference>
<dbReference type="Gene3D" id="1.20.120.1910">
    <property type="entry name" value="Cysteine-tRNA ligase, C-terminal anti-codon recognition domain"/>
    <property type="match status" value="1"/>
</dbReference>
<dbReference type="Gene3D" id="3.40.50.620">
    <property type="entry name" value="HUPs"/>
    <property type="match status" value="1"/>
</dbReference>
<dbReference type="HAMAP" id="MF_00041">
    <property type="entry name" value="Cys_tRNA_synth"/>
    <property type="match status" value="1"/>
</dbReference>
<dbReference type="InterPro" id="IPR015803">
    <property type="entry name" value="Cys-tRNA-ligase"/>
</dbReference>
<dbReference type="InterPro" id="IPR015273">
    <property type="entry name" value="Cys-tRNA-synt_Ia_DALR"/>
</dbReference>
<dbReference type="InterPro" id="IPR024909">
    <property type="entry name" value="Cys-tRNA/MSH_ligase"/>
</dbReference>
<dbReference type="InterPro" id="IPR056411">
    <property type="entry name" value="CysS_C"/>
</dbReference>
<dbReference type="InterPro" id="IPR014729">
    <property type="entry name" value="Rossmann-like_a/b/a_fold"/>
</dbReference>
<dbReference type="InterPro" id="IPR032678">
    <property type="entry name" value="tRNA-synt_1_cat_dom"/>
</dbReference>
<dbReference type="InterPro" id="IPR009080">
    <property type="entry name" value="tRNAsynth_Ia_anticodon-bd"/>
</dbReference>
<dbReference type="NCBIfam" id="TIGR00435">
    <property type="entry name" value="cysS"/>
    <property type="match status" value="1"/>
</dbReference>
<dbReference type="PANTHER" id="PTHR10890:SF3">
    <property type="entry name" value="CYSTEINE--TRNA LIGASE, CYTOPLASMIC"/>
    <property type="match status" value="1"/>
</dbReference>
<dbReference type="PANTHER" id="PTHR10890">
    <property type="entry name" value="CYSTEINYL-TRNA SYNTHETASE"/>
    <property type="match status" value="1"/>
</dbReference>
<dbReference type="Pfam" id="PF23493">
    <property type="entry name" value="CysS_C"/>
    <property type="match status" value="1"/>
</dbReference>
<dbReference type="Pfam" id="PF09190">
    <property type="entry name" value="DALR_2"/>
    <property type="match status" value="1"/>
</dbReference>
<dbReference type="Pfam" id="PF01406">
    <property type="entry name" value="tRNA-synt_1e"/>
    <property type="match status" value="1"/>
</dbReference>
<dbReference type="PRINTS" id="PR00983">
    <property type="entry name" value="TRNASYNTHCYS"/>
</dbReference>
<dbReference type="SMART" id="SM00840">
    <property type="entry name" value="DALR_2"/>
    <property type="match status" value="1"/>
</dbReference>
<dbReference type="SUPFAM" id="SSF47323">
    <property type="entry name" value="Anticodon-binding domain of a subclass of class I aminoacyl-tRNA synthetases"/>
    <property type="match status" value="1"/>
</dbReference>
<dbReference type="SUPFAM" id="SSF52374">
    <property type="entry name" value="Nucleotidylyl transferase"/>
    <property type="match status" value="1"/>
</dbReference>
<comment type="catalytic activity">
    <reaction evidence="1">
        <text>tRNA(Cys) + L-cysteine + ATP = L-cysteinyl-tRNA(Cys) + AMP + diphosphate</text>
        <dbReference type="Rhea" id="RHEA:17773"/>
        <dbReference type="Rhea" id="RHEA-COMP:9661"/>
        <dbReference type="Rhea" id="RHEA-COMP:9679"/>
        <dbReference type="ChEBI" id="CHEBI:30616"/>
        <dbReference type="ChEBI" id="CHEBI:33019"/>
        <dbReference type="ChEBI" id="CHEBI:35235"/>
        <dbReference type="ChEBI" id="CHEBI:78442"/>
        <dbReference type="ChEBI" id="CHEBI:78517"/>
        <dbReference type="ChEBI" id="CHEBI:456215"/>
        <dbReference type="EC" id="6.1.1.16"/>
    </reaction>
</comment>
<comment type="cofactor">
    <cofactor evidence="1">
        <name>Zn(2+)</name>
        <dbReference type="ChEBI" id="CHEBI:29105"/>
    </cofactor>
    <text evidence="1">Binds 1 zinc ion per subunit.</text>
</comment>
<comment type="subunit">
    <text evidence="1">Monomer.</text>
</comment>
<comment type="subcellular location">
    <subcellularLocation>
        <location evidence="1">Cytoplasm</location>
    </subcellularLocation>
</comment>
<comment type="similarity">
    <text evidence="1">Belongs to the class-I aminoacyl-tRNA synthetase family.</text>
</comment>
<feature type="chain" id="PRO_0000332903" description="Cysteine--tRNA ligase">
    <location>
        <begin position="1"/>
        <end position="459"/>
    </location>
</feature>
<feature type="short sequence motif" description="'HIGH' region">
    <location>
        <begin position="30"/>
        <end position="40"/>
    </location>
</feature>
<feature type="short sequence motif" description="'KMSKS' region">
    <location>
        <begin position="266"/>
        <end position="270"/>
    </location>
</feature>
<feature type="binding site" evidence="1">
    <location>
        <position position="28"/>
    </location>
    <ligand>
        <name>Zn(2+)</name>
        <dbReference type="ChEBI" id="CHEBI:29105"/>
    </ligand>
</feature>
<feature type="binding site" evidence="1">
    <location>
        <position position="209"/>
    </location>
    <ligand>
        <name>Zn(2+)</name>
        <dbReference type="ChEBI" id="CHEBI:29105"/>
    </ligand>
</feature>
<feature type="binding site" evidence="1">
    <location>
        <position position="234"/>
    </location>
    <ligand>
        <name>Zn(2+)</name>
        <dbReference type="ChEBI" id="CHEBI:29105"/>
    </ligand>
</feature>
<feature type="binding site" evidence="1">
    <location>
        <position position="238"/>
    </location>
    <ligand>
        <name>Zn(2+)</name>
        <dbReference type="ChEBI" id="CHEBI:29105"/>
    </ligand>
</feature>
<feature type="binding site" evidence="1">
    <location>
        <position position="269"/>
    </location>
    <ligand>
        <name>ATP</name>
        <dbReference type="ChEBI" id="CHEBI:30616"/>
    </ligand>
</feature>
<name>SYC_SHELP</name>
<keyword id="KW-0030">Aminoacyl-tRNA synthetase</keyword>
<keyword id="KW-0067">ATP-binding</keyword>
<keyword id="KW-0963">Cytoplasm</keyword>
<keyword id="KW-0436">Ligase</keyword>
<keyword id="KW-0479">Metal-binding</keyword>
<keyword id="KW-0547">Nucleotide-binding</keyword>
<keyword id="KW-0648">Protein biosynthesis</keyword>
<keyword id="KW-1185">Reference proteome</keyword>
<keyword id="KW-0862">Zinc</keyword>
<organism>
    <name type="scientific">Shewanella loihica (strain ATCC BAA-1088 / PV-4)</name>
    <dbReference type="NCBI Taxonomy" id="323850"/>
    <lineage>
        <taxon>Bacteria</taxon>
        <taxon>Pseudomonadati</taxon>
        <taxon>Pseudomonadota</taxon>
        <taxon>Gammaproteobacteria</taxon>
        <taxon>Alteromonadales</taxon>
        <taxon>Shewanellaceae</taxon>
        <taxon>Shewanella</taxon>
    </lineage>
</organism>